<feature type="chain" id="PRO_1000115357" description="Chorismate synthase">
    <location>
        <begin position="1"/>
        <end position="365"/>
    </location>
</feature>
<feature type="binding site" evidence="1">
    <location>
        <position position="46"/>
    </location>
    <ligand>
        <name>NADP(+)</name>
        <dbReference type="ChEBI" id="CHEBI:58349"/>
    </ligand>
</feature>
<feature type="binding site" evidence="1">
    <location>
        <begin position="123"/>
        <end position="125"/>
    </location>
    <ligand>
        <name>FMN</name>
        <dbReference type="ChEBI" id="CHEBI:58210"/>
    </ligand>
</feature>
<feature type="binding site" evidence="1">
    <location>
        <begin position="241"/>
        <end position="242"/>
    </location>
    <ligand>
        <name>FMN</name>
        <dbReference type="ChEBI" id="CHEBI:58210"/>
    </ligand>
</feature>
<feature type="binding site" evidence="1">
    <location>
        <position position="281"/>
    </location>
    <ligand>
        <name>FMN</name>
        <dbReference type="ChEBI" id="CHEBI:58210"/>
    </ligand>
</feature>
<feature type="binding site" evidence="1">
    <location>
        <begin position="296"/>
        <end position="300"/>
    </location>
    <ligand>
        <name>FMN</name>
        <dbReference type="ChEBI" id="CHEBI:58210"/>
    </ligand>
</feature>
<feature type="binding site" evidence="1">
    <location>
        <position position="322"/>
    </location>
    <ligand>
        <name>FMN</name>
        <dbReference type="ChEBI" id="CHEBI:58210"/>
    </ligand>
</feature>
<reference key="1">
    <citation type="submission" date="2008-05" db="EMBL/GenBank/DDBJ databases">
        <title>Genome sequence of Helicobacter pylori from the remote Amazon: traces of Asian ancestry of the first Americans.</title>
        <authorList>
            <person name="Kersulyte D."/>
            <person name="Kalia A."/>
            <person name="Gilman R.H."/>
            <person name="Berg D.E."/>
        </authorList>
    </citation>
    <scope>NUCLEOTIDE SEQUENCE [LARGE SCALE GENOMIC DNA]</scope>
    <source>
        <strain>Shi470</strain>
    </source>
</reference>
<comment type="function">
    <text evidence="1">Catalyzes the anti-1,4-elimination of the C-3 phosphate and the C-6 proR hydrogen from 5-enolpyruvylshikimate-3-phosphate (EPSP) to yield chorismate, which is the branch point compound that serves as the starting substrate for the three terminal pathways of aromatic amino acid biosynthesis. This reaction introduces a second double bond into the aromatic ring system.</text>
</comment>
<comment type="catalytic activity">
    <reaction evidence="1">
        <text>5-O-(1-carboxyvinyl)-3-phosphoshikimate = chorismate + phosphate</text>
        <dbReference type="Rhea" id="RHEA:21020"/>
        <dbReference type="ChEBI" id="CHEBI:29748"/>
        <dbReference type="ChEBI" id="CHEBI:43474"/>
        <dbReference type="ChEBI" id="CHEBI:57701"/>
        <dbReference type="EC" id="4.2.3.5"/>
    </reaction>
</comment>
<comment type="cofactor">
    <cofactor evidence="1">
        <name>FMNH2</name>
        <dbReference type="ChEBI" id="CHEBI:57618"/>
    </cofactor>
    <text evidence="1">Reduced FMN (FMNH(2)).</text>
</comment>
<comment type="pathway">
    <text evidence="1">Metabolic intermediate biosynthesis; chorismate biosynthesis; chorismate from D-erythrose 4-phosphate and phosphoenolpyruvate: step 7/7.</text>
</comment>
<comment type="subunit">
    <text evidence="1">Homotetramer.</text>
</comment>
<comment type="similarity">
    <text evidence="1">Belongs to the chorismate synthase family.</text>
</comment>
<accession>B2UTG3</accession>
<organism>
    <name type="scientific">Helicobacter pylori (strain Shi470)</name>
    <dbReference type="NCBI Taxonomy" id="512562"/>
    <lineage>
        <taxon>Bacteria</taxon>
        <taxon>Pseudomonadati</taxon>
        <taxon>Campylobacterota</taxon>
        <taxon>Epsilonproteobacteria</taxon>
        <taxon>Campylobacterales</taxon>
        <taxon>Helicobacteraceae</taxon>
        <taxon>Helicobacter</taxon>
    </lineage>
</organism>
<dbReference type="EC" id="4.2.3.5" evidence="1"/>
<dbReference type="EMBL" id="CP001072">
    <property type="protein sequence ID" value="ACD48145.1"/>
    <property type="molecule type" value="Genomic_DNA"/>
</dbReference>
<dbReference type="RefSeq" id="WP_001094046.1">
    <property type="nucleotide sequence ID" value="NC_010698.2"/>
</dbReference>
<dbReference type="SMR" id="B2UTG3"/>
<dbReference type="KEGG" id="hps:HPSH_03540"/>
<dbReference type="HOGENOM" id="CLU_034547_0_2_7"/>
<dbReference type="UniPathway" id="UPA00053">
    <property type="reaction ID" value="UER00090"/>
</dbReference>
<dbReference type="GO" id="GO:0005829">
    <property type="term" value="C:cytosol"/>
    <property type="evidence" value="ECO:0007669"/>
    <property type="project" value="TreeGrafter"/>
</dbReference>
<dbReference type="GO" id="GO:0004107">
    <property type="term" value="F:chorismate synthase activity"/>
    <property type="evidence" value="ECO:0007669"/>
    <property type="project" value="UniProtKB-UniRule"/>
</dbReference>
<dbReference type="GO" id="GO:0010181">
    <property type="term" value="F:FMN binding"/>
    <property type="evidence" value="ECO:0007669"/>
    <property type="project" value="TreeGrafter"/>
</dbReference>
<dbReference type="GO" id="GO:0008652">
    <property type="term" value="P:amino acid biosynthetic process"/>
    <property type="evidence" value="ECO:0007669"/>
    <property type="project" value="UniProtKB-KW"/>
</dbReference>
<dbReference type="GO" id="GO:0009073">
    <property type="term" value="P:aromatic amino acid family biosynthetic process"/>
    <property type="evidence" value="ECO:0007669"/>
    <property type="project" value="UniProtKB-KW"/>
</dbReference>
<dbReference type="GO" id="GO:0009423">
    <property type="term" value="P:chorismate biosynthetic process"/>
    <property type="evidence" value="ECO:0007669"/>
    <property type="project" value="UniProtKB-UniRule"/>
</dbReference>
<dbReference type="CDD" id="cd07304">
    <property type="entry name" value="Chorismate_synthase"/>
    <property type="match status" value="1"/>
</dbReference>
<dbReference type="FunFam" id="3.60.150.10:FF:000011">
    <property type="entry name" value="Chorismate synthase"/>
    <property type="match status" value="1"/>
</dbReference>
<dbReference type="Gene3D" id="3.60.150.10">
    <property type="entry name" value="Chorismate synthase AroC"/>
    <property type="match status" value="1"/>
</dbReference>
<dbReference type="HAMAP" id="MF_00300">
    <property type="entry name" value="Chorismate_synth"/>
    <property type="match status" value="1"/>
</dbReference>
<dbReference type="InterPro" id="IPR000453">
    <property type="entry name" value="Chorismate_synth"/>
</dbReference>
<dbReference type="InterPro" id="IPR035904">
    <property type="entry name" value="Chorismate_synth_AroC_sf"/>
</dbReference>
<dbReference type="InterPro" id="IPR020541">
    <property type="entry name" value="Chorismate_synthase_CS"/>
</dbReference>
<dbReference type="NCBIfam" id="TIGR00033">
    <property type="entry name" value="aroC"/>
    <property type="match status" value="1"/>
</dbReference>
<dbReference type="NCBIfam" id="NF003793">
    <property type="entry name" value="PRK05382.1"/>
    <property type="match status" value="1"/>
</dbReference>
<dbReference type="PANTHER" id="PTHR21085">
    <property type="entry name" value="CHORISMATE SYNTHASE"/>
    <property type="match status" value="1"/>
</dbReference>
<dbReference type="PANTHER" id="PTHR21085:SF0">
    <property type="entry name" value="CHORISMATE SYNTHASE"/>
    <property type="match status" value="1"/>
</dbReference>
<dbReference type="Pfam" id="PF01264">
    <property type="entry name" value="Chorismate_synt"/>
    <property type="match status" value="1"/>
</dbReference>
<dbReference type="PIRSF" id="PIRSF001456">
    <property type="entry name" value="Chorismate_synth"/>
    <property type="match status" value="1"/>
</dbReference>
<dbReference type="SUPFAM" id="SSF103263">
    <property type="entry name" value="Chorismate synthase, AroC"/>
    <property type="match status" value="1"/>
</dbReference>
<dbReference type="PROSITE" id="PS00787">
    <property type="entry name" value="CHORISMATE_SYNTHASE_1"/>
    <property type="match status" value="1"/>
</dbReference>
<dbReference type="PROSITE" id="PS00788">
    <property type="entry name" value="CHORISMATE_SYNTHASE_2"/>
    <property type="match status" value="1"/>
</dbReference>
<dbReference type="PROSITE" id="PS00789">
    <property type="entry name" value="CHORISMATE_SYNTHASE_3"/>
    <property type="match status" value="1"/>
</dbReference>
<gene>
    <name evidence="1" type="primary">aroC</name>
    <name type="ordered locus">HPSH_03540</name>
</gene>
<name>AROC_HELPS</name>
<proteinExistence type="inferred from homology"/>
<evidence type="ECO:0000255" key="1">
    <source>
        <dbReference type="HAMAP-Rule" id="MF_00300"/>
    </source>
</evidence>
<protein>
    <recommendedName>
        <fullName evidence="1">Chorismate synthase</fullName>
        <shortName evidence="1">CS</shortName>
        <ecNumber evidence="1">4.2.3.5</ecNumber>
    </recommendedName>
    <alternativeName>
        <fullName evidence="1">5-enolpyruvylshikimate-3-phosphate phospholyase</fullName>
    </alternativeName>
</protein>
<sequence>MNTLGRFLRLTTFGESHGDVIGGVLDGMPSGIKIDYALLENEMKRRQGGRNVFITPRKEDDKVEITSGVFEGFSTGTPIGFLIHNQRARSKDYDNIKNLFRPSHADFTYFHKYGIRDFRGGGRSSARESAIRVAAGAFAKMLLREIGIVCESGIIEIGGIKAKNYDFNHALKSEIFALDEEQEEVQKTAIQNAIKNHDSIGGVALIRARSAKTNQKLPIGLGQGLYAKLDAKIAEAMIGLNGVKAVEIGKGVESSLLKGSEYNDLMDQKGFLSNRSGGVLGGMSNGEEIIIRAHFKPTPSIFQPQQTIDINNQECECLLKGRHDPCIAIRGSVVCESLLSLVLADMVLLNLTSKIEYLKTIYNEN</sequence>
<keyword id="KW-0028">Amino-acid biosynthesis</keyword>
<keyword id="KW-0057">Aromatic amino acid biosynthesis</keyword>
<keyword id="KW-0274">FAD</keyword>
<keyword id="KW-0285">Flavoprotein</keyword>
<keyword id="KW-0288">FMN</keyword>
<keyword id="KW-0456">Lyase</keyword>
<keyword id="KW-0521">NADP</keyword>